<sequence length="229" mass="25569">MSQGDSNPAAIPHAAEDIQGDDRWMSQHNRFVLDCKDKEPDVLFVGDSMVQLMQQYEIWRELFSPLHALNFGIGGDTTRHVLWRLKNGELENIKPKVIVVWVGTNNHENTAEEVAGGIEAIVQLINTRQPQAKIIVLGLLPRGEKPNPLRQKNAKVNQLLKVSLPKLANVQLLDTDGGFVHSDGAISCHDMFDFLHLTGGGYAKICKPLHELIMQLLEETPEEKQTTIA</sequence>
<comment type="function">
    <text evidence="3 6">Alpha2 catalytic subunit of the cytosolic type I platelet-activating factor (PAF) acetylhydrolase (PAF-AH (I)) heterotetrameric enzyme that catalyzes the hydrolyze of the acetyl group at the sn-2 position of PAF and its analogs and modulates the action of PAF. The activity and substrate specificity of PAF-AH (I) are affected by its subunit composition. The alpha2/alpha2 homodimer (PAFAH1B2/PAFAH1B2 homodimer) hydrolyzes PAF and 1-O-alkyl-2-acetyl-sn-glycero-3-phosphorylethanolamine (AAGPE) more efficiently than 1-O-alkyl-2-acetyl-sn-glycero-3-phosphoric acid (AAGPA). In contrast, the alpha1/alpha2 heterodimer(PAFAH1B3/PAFAH1B3 heterodimer) hydrolyzes AAGPA more efficiently than PAF, but has little hydrolytic activity towards AAGPE (By similarity). May play a role in male germ cell meiosis during the late pachytenestage and meiotic divisions as well as early spermiogenesis (By similarity).</text>
</comment>
<comment type="catalytic activity">
    <reaction evidence="3">
        <text>a 1-O-alkyl-2-acetyl-sn-glycero-3-phosphocholine + H2O = a 1-O-alkyl-sn-glycero-3-phosphocholine + acetate + H(+)</text>
        <dbReference type="Rhea" id="RHEA:17777"/>
        <dbReference type="ChEBI" id="CHEBI:15377"/>
        <dbReference type="ChEBI" id="CHEBI:15378"/>
        <dbReference type="ChEBI" id="CHEBI:30089"/>
        <dbReference type="ChEBI" id="CHEBI:30909"/>
        <dbReference type="ChEBI" id="CHEBI:36707"/>
        <dbReference type="EC" id="3.1.1.47"/>
    </reaction>
    <physiologicalReaction direction="left-to-right" evidence="3">
        <dbReference type="Rhea" id="RHEA:17778"/>
    </physiologicalReaction>
</comment>
<comment type="catalytic activity">
    <reaction evidence="3">
        <text>1-O-hexadecyl-2-acetyl-sn-glycero-3-phosphocholine + H2O = 1-O-hexadecyl-sn-glycero-3-phosphocholine + acetate + H(+)</text>
        <dbReference type="Rhea" id="RHEA:40479"/>
        <dbReference type="ChEBI" id="CHEBI:15377"/>
        <dbReference type="ChEBI" id="CHEBI:15378"/>
        <dbReference type="ChEBI" id="CHEBI:30089"/>
        <dbReference type="ChEBI" id="CHEBI:44811"/>
        <dbReference type="ChEBI" id="CHEBI:64496"/>
    </reaction>
    <physiologicalReaction direction="left-to-right" evidence="3">
        <dbReference type="Rhea" id="RHEA:40480"/>
    </physiologicalReaction>
</comment>
<comment type="catalytic activity">
    <reaction evidence="3">
        <text>1-O-hexadecyl-2-acetyl-sn-glycero-3-phosphate + H2O = 1-O-hexadecyl-sn-glycero-3-phosphate + acetate + H(+)</text>
        <dbReference type="Rhea" id="RHEA:41704"/>
        <dbReference type="ChEBI" id="CHEBI:15377"/>
        <dbReference type="ChEBI" id="CHEBI:15378"/>
        <dbReference type="ChEBI" id="CHEBI:30089"/>
        <dbReference type="ChEBI" id="CHEBI:77580"/>
        <dbReference type="ChEBI" id="CHEBI:78385"/>
    </reaction>
    <physiologicalReaction direction="left-to-right" evidence="3">
        <dbReference type="Rhea" id="RHEA:41705"/>
    </physiologicalReaction>
</comment>
<comment type="catalytic activity">
    <reaction evidence="3">
        <text>1-O-hexadecyl-2-acetyl-sn-glycero-3-phosphoethanolamine + H2O = 1-O-hexadecyl-sn-glycero-3-phosphoethanolamine + acetate + H(+)</text>
        <dbReference type="Rhea" id="RHEA:41708"/>
        <dbReference type="ChEBI" id="CHEBI:15377"/>
        <dbReference type="ChEBI" id="CHEBI:15378"/>
        <dbReference type="ChEBI" id="CHEBI:30089"/>
        <dbReference type="ChEBI" id="CHEBI:78387"/>
        <dbReference type="ChEBI" id="CHEBI:78390"/>
    </reaction>
    <physiologicalReaction direction="left-to-right" evidence="3">
        <dbReference type="Rhea" id="RHEA:41709"/>
    </physiologicalReaction>
</comment>
<comment type="activity regulation">
    <text evidence="3">Beta subunit (PAFAH1B1) stimulates the acetylhydrolase activity of the alpha2/alpha2 catalytic homodimer.</text>
</comment>
<comment type="subunit">
    <text evidence="3 6 7">Forms a catalytic dimer which is either homodimer (alpha2/alpha2 homodimer) or heterodimer with PAFAH1B3 (alpha2/alpha1 heterodimer). Component of the cytosolic (PAF-AH (I)) heterotetrameric enzyme, which is composed of PAFAH1B1 (beta), PAFAH1B2 (alpha2) and PAFAH1B3 (alpha1) subunits. The catalytic activity of the enzyme resides in the alpha1 (PAFAH1B3) and alpha2 (PAFAH1B2) subunits, whereas the beta subunit (PAFAH1B1) has regulatory activity. Trimer formation is not essential for the catalytic activity (By similarity). Interacts (homodimer form) with PAFAH1B1 (homodimer form); PAFAH1B2 competes with NDEL1 for PAFAH1B1 binding (PubMed:15572112). Interacts with VLDLR; this interaction may modulate the Reelin pathway (By similarity).</text>
</comment>
<comment type="interaction">
    <interactant intactId="EBI-713724">
        <id>P68402</id>
    </interactant>
    <interactant intactId="EBI-12357161">
        <id>Q5SYC1</id>
        <label>CLVS2</label>
    </interactant>
    <organismsDiffer>false</organismsDiffer>
    <experiments>3</experiments>
</comment>
<comment type="interaction">
    <interactant intactId="EBI-713724">
        <id>P68402</id>
    </interactant>
    <interactant intactId="EBI-720620">
        <id>P43034</id>
        <label>PAFAH1B1</label>
    </interactant>
    <organismsDiffer>false</organismsDiffer>
    <experiments>3</experiments>
</comment>
<comment type="interaction">
    <interactant intactId="EBI-713724">
        <id>P68402</id>
    </interactant>
    <interactant intactId="EBI-711522">
        <id>Q15102</id>
        <label>PAFAH1B3</label>
    </interactant>
    <organismsDiffer>false</organismsDiffer>
    <experiments>6</experiments>
</comment>
<comment type="interaction">
    <interactant intactId="EBI-713724">
        <id>P68402</id>
    </interactant>
    <interactant intactId="EBI-21251460">
        <id>O60260-5</id>
        <label>PRKN</label>
    </interactant>
    <organismsDiffer>false</organismsDiffer>
    <experiments>3</experiments>
</comment>
<comment type="subcellular location">
    <subcellularLocation>
        <location>Cytoplasm</location>
    </subcellularLocation>
</comment>
<comment type="alternative products">
    <event type="alternative splicing"/>
    <isoform>
        <id>P68402-1</id>
        <name>1</name>
        <sequence type="displayed"/>
    </isoform>
    <isoform>
        <id>P68402-2</id>
        <name>2</name>
        <sequence type="described" ref="VSP_042896"/>
    </isoform>
    <isoform>
        <id>P68402-3</id>
        <name>3</name>
        <sequence type="described" ref="VSP_043217"/>
    </isoform>
    <isoform>
        <id>P68402-4</id>
        <name>4</name>
        <sequence type="described" ref="VSP_044680"/>
    </isoform>
</comment>
<comment type="tissue specificity">
    <text evidence="8">Ubiquitous.</text>
</comment>
<comment type="miscellaneous">
    <text evidence="2 4 5 10">Originally the subunits of the type I platelet-activating factor (PAF) acetylhydrolase was named alpha (PAFAH1B1), beta (PAFAH1B2) and gamma (PAFAH1B3) (By similarity) (PubMed:9144386). Now these subunits have been renamed beta (PAFAH1B1), alpha2 (PAFAH1B2) and alpha1 (PAFAH1B3) respectively (By similarity).</text>
</comment>
<comment type="similarity">
    <text evidence="11">Belongs to the 'GDSL' lipolytic enzyme family. Platelet-activating factor acetylhydrolase IB beta/gamma subunits subfamily.</text>
</comment>
<reference key="1">
    <citation type="journal article" date="1997" name="Biochem. Biophys. Res. Commun.">
        <title>Differential tissue distribution of the beta- and gamma-subunits of human cytosolic platelet-activating factor acetylhydrolase (isoform I).</title>
        <authorList>
            <person name="Adachi H."/>
            <person name="Tsujimoto M."/>
            <person name="Hattori M."/>
            <person name="Arai H."/>
            <person name="Inoue K."/>
        </authorList>
    </citation>
    <scope>NUCLEOTIDE SEQUENCE [MRNA] (ISOFORM 1)</scope>
    <scope>TISSUE SPECIFICITY</scope>
    <source>
        <tissue>Fetal liver</tissue>
    </source>
</reference>
<reference key="2">
    <citation type="journal article" date="2008" name="Prostaglandins Other Lipid Mediat.">
        <title>Novel isoforms of intracellular platelet activating factor acetylhydrolase (PAFAH1b2) in human testis; encoded by alternatively spliced mRNAs.</title>
        <authorList>
            <person name="Scott B.T."/>
            <person name="Olson N."/>
            <person name="Long G.L."/>
            <person name="Bovill E.G."/>
        </authorList>
    </citation>
    <scope>NUCLEOTIDE SEQUENCE [MRNA] (ISOFORMS 1; 2; 3 AND 4)</scope>
    <scope>ALTERNATIVE SPLICING</scope>
    <source>
        <tissue>Testis</tissue>
    </source>
</reference>
<reference key="3">
    <citation type="journal article" date="2004" name="Nat. Genet.">
        <title>Complete sequencing and characterization of 21,243 full-length human cDNAs.</title>
        <authorList>
            <person name="Ota T."/>
            <person name="Suzuki Y."/>
            <person name="Nishikawa T."/>
            <person name="Otsuki T."/>
            <person name="Sugiyama T."/>
            <person name="Irie R."/>
            <person name="Wakamatsu A."/>
            <person name="Hayashi K."/>
            <person name="Sato H."/>
            <person name="Nagai K."/>
            <person name="Kimura K."/>
            <person name="Makita H."/>
            <person name="Sekine M."/>
            <person name="Obayashi M."/>
            <person name="Nishi T."/>
            <person name="Shibahara T."/>
            <person name="Tanaka T."/>
            <person name="Ishii S."/>
            <person name="Yamamoto J."/>
            <person name="Saito K."/>
            <person name="Kawai Y."/>
            <person name="Isono Y."/>
            <person name="Nakamura Y."/>
            <person name="Nagahari K."/>
            <person name="Murakami K."/>
            <person name="Yasuda T."/>
            <person name="Iwayanagi T."/>
            <person name="Wagatsuma M."/>
            <person name="Shiratori A."/>
            <person name="Sudo H."/>
            <person name="Hosoiri T."/>
            <person name="Kaku Y."/>
            <person name="Kodaira H."/>
            <person name="Kondo H."/>
            <person name="Sugawara M."/>
            <person name="Takahashi M."/>
            <person name="Kanda K."/>
            <person name="Yokoi T."/>
            <person name="Furuya T."/>
            <person name="Kikkawa E."/>
            <person name="Omura Y."/>
            <person name="Abe K."/>
            <person name="Kamihara K."/>
            <person name="Katsuta N."/>
            <person name="Sato K."/>
            <person name="Tanikawa M."/>
            <person name="Yamazaki M."/>
            <person name="Ninomiya K."/>
            <person name="Ishibashi T."/>
            <person name="Yamashita H."/>
            <person name="Murakawa K."/>
            <person name="Fujimori K."/>
            <person name="Tanai H."/>
            <person name="Kimata M."/>
            <person name="Watanabe M."/>
            <person name="Hiraoka S."/>
            <person name="Chiba Y."/>
            <person name="Ishida S."/>
            <person name="Ono Y."/>
            <person name="Takiguchi S."/>
            <person name="Watanabe S."/>
            <person name="Yosida M."/>
            <person name="Hotuta T."/>
            <person name="Kusano J."/>
            <person name="Kanehori K."/>
            <person name="Takahashi-Fujii A."/>
            <person name="Hara H."/>
            <person name="Tanase T.-O."/>
            <person name="Nomura Y."/>
            <person name="Togiya S."/>
            <person name="Komai F."/>
            <person name="Hara R."/>
            <person name="Takeuchi K."/>
            <person name="Arita M."/>
            <person name="Imose N."/>
            <person name="Musashino K."/>
            <person name="Yuuki H."/>
            <person name="Oshima A."/>
            <person name="Sasaki N."/>
            <person name="Aotsuka S."/>
            <person name="Yoshikawa Y."/>
            <person name="Matsunawa H."/>
            <person name="Ichihara T."/>
            <person name="Shiohata N."/>
            <person name="Sano S."/>
            <person name="Moriya S."/>
            <person name="Momiyama H."/>
            <person name="Satoh N."/>
            <person name="Takami S."/>
            <person name="Terashima Y."/>
            <person name="Suzuki O."/>
            <person name="Nakagawa S."/>
            <person name="Senoh A."/>
            <person name="Mizoguchi H."/>
            <person name="Goto Y."/>
            <person name="Shimizu F."/>
            <person name="Wakebe H."/>
            <person name="Hishigaki H."/>
            <person name="Watanabe T."/>
            <person name="Sugiyama A."/>
            <person name="Takemoto M."/>
            <person name="Kawakami B."/>
            <person name="Yamazaki M."/>
            <person name="Watanabe K."/>
            <person name="Kumagai A."/>
            <person name="Itakura S."/>
            <person name="Fukuzumi Y."/>
            <person name="Fujimori Y."/>
            <person name="Komiyama M."/>
            <person name="Tashiro H."/>
            <person name="Tanigami A."/>
            <person name="Fujiwara T."/>
            <person name="Ono T."/>
            <person name="Yamada K."/>
            <person name="Fujii Y."/>
            <person name="Ozaki K."/>
            <person name="Hirao M."/>
            <person name="Ohmori Y."/>
            <person name="Kawabata A."/>
            <person name="Hikiji T."/>
            <person name="Kobatake N."/>
            <person name="Inagaki H."/>
            <person name="Ikema Y."/>
            <person name="Okamoto S."/>
            <person name="Okitani R."/>
            <person name="Kawakami T."/>
            <person name="Noguchi S."/>
            <person name="Itoh T."/>
            <person name="Shigeta K."/>
            <person name="Senba T."/>
            <person name="Matsumura K."/>
            <person name="Nakajima Y."/>
            <person name="Mizuno T."/>
            <person name="Morinaga M."/>
            <person name="Sasaki M."/>
            <person name="Togashi T."/>
            <person name="Oyama M."/>
            <person name="Hata H."/>
            <person name="Watanabe M."/>
            <person name="Komatsu T."/>
            <person name="Mizushima-Sugano J."/>
            <person name="Satoh T."/>
            <person name="Shirai Y."/>
            <person name="Takahashi Y."/>
            <person name="Nakagawa K."/>
            <person name="Okumura K."/>
            <person name="Nagase T."/>
            <person name="Nomura N."/>
            <person name="Kikuchi H."/>
            <person name="Masuho Y."/>
            <person name="Yamashita R."/>
            <person name="Nakai K."/>
            <person name="Yada T."/>
            <person name="Nakamura Y."/>
            <person name="Ohara O."/>
            <person name="Isogai T."/>
            <person name="Sugano S."/>
        </authorList>
    </citation>
    <scope>NUCLEOTIDE SEQUENCE [LARGE SCALE MRNA] (ISOFORM 1)</scope>
    <source>
        <tissue>Trachea</tissue>
    </source>
</reference>
<reference key="4">
    <citation type="submission" date="2004-06" db="EMBL/GenBank/DDBJ databases">
        <title>Cloning of human full open reading frames in Gateway(TM) system entry vector (pDONR201).</title>
        <authorList>
            <person name="Ebert L."/>
            <person name="Schick M."/>
            <person name="Neubert P."/>
            <person name="Schatten R."/>
            <person name="Henze S."/>
            <person name="Korn B."/>
        </authorList>
    </citation>
    <scope>NUCLEOTIDE SEQUENCE [LARGE SCALE MRNA] (ISOFORM 1)</scope>
</reference>
<reference key="5">
    <citation type="submission" date="2007-02" db="EMBL/GenBank/DDBJ databases">
        <authorList>
            <consortium name="NHLBI resequencing and genotyping service (RS&amp;G)"/>
        </authorList>
    </citation>
    <scope>NUCLEOTIDE SEQUENCE [GENOMIC DNA]</scope>
</reference>
<reference key="6">
    <citation type="journal article" date="2006" name="Nature">
        <title>Human chromosome 11 DNA sequence and analysis including novel gene identification.</title>
        <authorList>
            <person name="Taylor T.D."/>
            <person name="Noguchi H."/>
            <person name="Totoki Y."/>
            <person name="Toyoda A."/>
            <person name="Kuroki Y."/>
            <person name="Dewar K."/>
            <person name="Lloyd C."/>
            <person name="Itoh T."/>
            <person name="Takeda T."/>
            <person name="Kim D.-W."/>
            <person name="She X."/>
            <person name="Barlow K.F."/>
            <person name="Bloom T."/>
            <person name="Bruford E."/>
            <person name="Chang J.L."/>
            <person name="Cuomo C.A."/>
            <person name="Eichler E."/>
            <person name="FitzGerald M.G."/>
            <person name="Jaffe D.B."/>
            <person name="LaButti K."/>
            <person name="Nicol R."/>
            <person name="Park H.-S."/>
            <person name="Seaman C."/>
            <person name="Sougnez C."/>
            <person name="Yang X."/>
            <person name="Zimmer A.R."/>
            <person name="Zody M.C."/>
            <person name="Birren B.W."/>
            <person name="Nusbaum C."/>
            <person name="Fujiyama A."/>
            <person name="Hattori M."/>
            <person name="Rogers J."/>
            <person name="Lander E.S."/>
            <person name="Sakaki Y."/>
        </authorList>
    </citation>
    <scope>NUCLEOTIDE SEQUENCE [LARGE SCALE GENOMIC DNA]</scope>
</reference>
<reference key="7">
    <citation type="submission" date="2005-07" db="EMBL/GenBank/DDBJ databases">
        <authorList>
            <person name="Mural R.J."/>
            <person name="Istrail S."/>
            <person name="Sutton G."/>
            <person name="Florea L."/>
            <person name="Halpern A.L."/>
            <person name="Mobarry C.M."/>
            <person name="Lippert R."/>
            <person name="Walenz B."/>
            <person name="Shatkay H."/>
            <person name="Dew I."/>
            <person name="Miller J.R."/>
            <person name="Flanigan M.J."/>
            <person name="Edwards N.J."/>
            <person name="Bolanos R."/>
            <person name="Fasulo D."/>
            <person name="Halldorsson B.V."/>
            <person name="Hannenhalli S."/>
            <person name="Turner R."/>
            <person name="Yooseph S."/>
            <person name="Lu F."/>
            <person name="Nusskern D.R."/>
            <person name="Shue B.C."/>
            <person name="Zheng X.H."/>
            <person name="Zhong F."/>
            <person name="Delcher A.L."/>
            <person name="Huson D.H."/>
            <person name="Kravitz S.A."/>
            <person name="Mouchard L."/>
            <person name="Reinert K."/>
            <person name="Remington K.A."/>
            <person name="Clark A.G."/>
            <person name="Waterman M.S."/>
            <person name="Eichler E.E."/>
            <person name="Adams M.D."/>
            <person name="Hunkapiller M.W."/>
            <person name="Myers E.W."/>
            <person name="Venter J.C."/>
        </authorList>
    </citation>
    <scope>NUCLEOTIDE SEQUENCE [LARGE SCALE GENOMIC DNA]</scope>
</reference>
<reference key="8">
    <citation type="journal article" date="2004" name="Genome Res.">
        <title>The status, quality, and expansion of the NIH full-length cDNA project: the Mammalian Gene Collection (MGC).</title>
        <authorList>
            <consortium name="The MGC Project Team"/>
        </authorList>
    </citation>
    <scope>NUCLEOTIDE SEQUENCE [LARGE SCALE MRNA] (ISOFORM 1)</scope>
    <source>
        <tissue>Lung</tissue>
    </source>
</reference>
<reference key="9">
    <citation type="submission" date="2007-03" db="UniProtKB">
        <authorList>
            <person name="Lubec G."/>
            <person name="Afjehi-Sadat L."/>
        </authorList>
    </citation>
    <scope>PROTEIN SEQUENCE OF 61-79</scope>
    <scope>IDENTIFICATION BY MASS SPECTROMETRY</scope>
    <source>
        <tissue>Brain</tissue>
        <tissue>Cajal-Retzius cell</tissue>
    </source>
</reference>
<reference key="10">
    <citation type="journal article" date="2009" name="Anal. Chem.">
        <title>Lys-N and trypsin cover complementary parts of the phosphoproteome in a refined SCX-based approach.</title>
        <authorList>
            <person name="Gauci S."/>
            <person name="Helbig A.O."/>
            <person name="Slijper M."/>
            <person name="Krijgsveld J."/>
            <person name="Heck A.J."/>
            <person name="Mohammed S."/>
        </authorList>
    </citation>
    <scope>ACETYLATION [LARGE SCALE ANALYSIS] AT SER-2</scope>
    <scope>CLEAVAGE OF INITIATOR METHIONINE [LARGE SCALE ANALYSIS]</scope>
    <scope>IDENTIFICATION BY MASS SPECTROMETRY [LARGE SCALE ANALYSIS]</scope>
</reference>
<reference key="11">
    <citation type="journal article" date="2010" name="Sci. Signal.">
        <title>Quantitative phosphoproteomics reveals widespread full phosphorylation site occupancy during mitosis.</title>
        <authorList>
            <person name="Olsen J.V."/>
            <person name="Vermeulen M."/>
            <person name="Santamaria A."/>
            <person name="Kumar C."/>
            <person name="Miller M.L."/>
            <person name="Jensen L.J."/>
            <person name="Gnad F."/>
            <person name="Cox J."/>
            <person name="Jensen T.S."/>
            <person name="Nigg E.A."/>
            <person name="Brunak S."/>
            <person name="Mann M."/>
        </authorList>
    </citation>
    <scope>ACETYLATION [LARGE SCALE ANALYSIS] AT SER-2</scope>
    <scope>PHOSPHORYLATION [LARGE SCALE ANALYSIS] AT SER-2</scope>
    <scope>CLEAVAGE OF INITIATOR METHIONINE [LARGE SCALE ANALYSIS]</scope>
    <scope>IDENTIFICATION BY MASS SPECTROMETRY [LARGE SCALE ANALYSIS]</scope>
    <source>
        <tissue>Cervix carcinoma</tissue>
    </source>
</reference>
<reference key="12">
    <citation type="journal article" date="2011" name="BMC Syst. Biol.">
        <title>Initial characterization of the human central proteome.</title>
        <authorList>
            <person name="Burkard T.R."/>
            <person name="Planyavsky M."/>
            <person name="Kaupe I."/>
            <person name="Breitwieser F.P."/>
            <person name="Buerckstuemmer T."/>
            <person name="Bennett K.L."/>
            <person name="Superti-Furga G."/>
            <person name="Colinge J."/>
        </authorList>
    </citation>
    <scope>IDENTIFICATION BY MASS SPECTROMETRY [LARGE SCALE ANALYSIS]</scope>
</reference>
<reference key="13">
    <citation type="journal article" date="2011" name="Sci. Signal.">
        <title>System-wide temporal characterization of the proteome and phosphoproteome of human embryonic stem cell differentiation.</title>
        <authorList>
            <person name="Rigbolt K.T."/>
            <person name="Prokhorova T.A."/>
            <person name="Akimov V."/>
            <person name="Henningsen J."/>
            <person name="Johansen P.T."/>
            <person name="Kratchmarova I."/>
            <person name="Kassem M."/>
            <person name="Mann M."/>
            <person name="Olsen J.V."/>
            <person name="Blagoev B."/>
        </authorList>
    </citation>
    <scope>ACETYLATION [LARGE SCALE ANALYSIS] AT SER-2</scope>
    <scope>PHOSPHORYLATION [LARGE SCALE ANALYSIS] AT SER-2</scope>
    <scope>CLEAVAGE OF INITIATOR METHIONINE [LARGE SCALE ANALYSIS]</scope>
    <scope>IDENTIFICATION BY MASS SPECTROMETRY [LARGE SCALE ANALYSIS]</scope>
</reference>
<reference key="14">
    <citation type="journal article" date="2013" name="J. Proteome Res.">
        <title>Toward a comprehensive characterization of a human cancer cell phosphoproteome.</title>
        <authorList>
            <person name="Zhou H."/>
            <person name="Di Palma S."/>
            <person name="Preisinger C."/>
            <person name="Peng M."/>
            <person name="Polat A.N."/>
            <person name="Heck A.J."/>
            <person name="Mohammed S."/>
        </authorList>
    </citation>
    <scope>PHOSPHORYLATION [LARGE SCALE ANALYSIS] AT SER-2 AND SER-64</scope>
    <scope>IDENTIFICATION BY MASS SPECTROMETRY [LARGE SCALE ANALYSIS]</scope>
    <source>
        <tissue>Cervix carcinoma</tissue>
        <tissue>Erythroleukemia</tissue>
    </source>
</reference>
<reference evidence="13" key="15">
    <citation type="journal article" date="2004" name="Neuron">
        <title>Coupling PAF signaling to dynein regulation: structure of LIS1 in complex with PAF-acetylhydrolase.</title>
        <authorList>
            <person name="Tarricone C."/>
            <person name="Perrina F."/>
            <person name="Monzani S."/>
            <person name="Massimiliano L."/>
            <person name="Kim M.-H."/>
            <person name="Derewenda Z.S."/>
            <person name="Knapp S."/>
            <person name="Tsai L.-H."/>
            <person name="Musacchio A."/>
        </authorList>
    </citation>
    <scope>X-RAY CRYSTALLOGRAPHY (3.40 ANGSTROMS) IN COMPLEX WITH PAFAH1B1</scope>
    <scope>SUBUNIT</scope>
</reference>
<keyword id="KW-0002">3D-structure</keyword>
<keyword id="KW-0007">Acetylation</keyword>
<keyword id="KW-0025">Alternative splicing</keyword>
<keyword id="KW-0963">Cytoplasm</keyword>
<keyword id="KW-0903">Direct protein sequencing</keyword>
<keyword id="KW-0378">Hydrolase</keyword>
<keyword id="KW-0442">Lipid degradation</keyword>
<keyword id="KW-0443">Lipid metabolism</keyword>
<keyword id="KW-0597">Phosphoprotein</keyword>
<keyword id="KW-1267">Proteomics identification</keyword>
<keyword id="KW-1185">Reference proteome</keyword>
<protein>
    <recommendedName>
        <fullName evidence="11">Platelet-activating factor acetylhydrolase IB subunit alpha2</fullName>
        <ecNumber evidence="3">3.1.1.47</ecNumber>
    </recommendedName>
    <alternativeName>
        <fullName>PAF acetylhydrolase 30 kDa subunit</fullName>
        <shortName>PAF-AH 30 kDa subunit</shortName>
    </alternativeName>
    <alternativeName>
        <fullName>PAF-AH subunit beta</fullName>
        <shortName>PAFAH subunit beta</shortName>
    </alternativeName>
</protein>
<gene>
    <name evidence="12" type="primary">PAFAH1B2</name>
    <name type="synonym">PAFAHB</name>
</gene>
<accession>P68402</accession>
<accession>A8DPS5</accession>
<accession>A8DPS6</accession>
<accession>A8DPS7</accession>
<accession>E9PEJ5</accession>
<accession>E9PLP3</accession>
<accession>O00687</accession>
<accession>Q29459</accession>
<accession>Q6IBR6</accession>
<name>PA1B2_HUMAN</name>
<dbReference type="EC" id="3.1.1.47" evidence="3"/>
<dbReference type="EMBL" id="D63390">
    <property type="protein sequence ID" value="BAA19917.1"/>
    <property type="molecule type" value="mRNA"/>
</dbReference>
<dbReference type="EMBL" id="DQ836738">
    <property type="protein sequence ID" value="ABI58225.1"/>
    <property type="molecule type" value="mRNA"/>
</dbReference>
<dbReference type="EMBL" id="DQ836739">
    <property type="protein sequence ID" value="ABI58226.1"/>
    <property type="molecule type" value="mRNA"/>
</dbReference>
<dbReference type="EMBL" id="DQ836740">
    <property type="protein sequence ID" value="ABI58227.1"/>
    <property type="molecule type" value="mRNA"/>
</dbReference>
<dbReference type="EMBL" id="DQ836741">
    <property type="protein sequence ID" value="ABI58228.1"/>
    <property type="molecule type" value="mRNA"/>
</dbReference>
<dbReference type="EMBL" id="DQ836742">
    <property type="protein sequence ID" value="ABI58229.1"/>
    <property type="molecule type" value="mRNA"/>
</dbReference>
<dbReference type="EMBL" id="DQ836743">
    <property type="protein sequence ID" value="ABI58230.1"/>
    <property type="molecule type" value="mRNA"/>
</dbReference>
<dbReference type="EMBL" id="AK292973">
    <property type="protein sequence ID" value="BAF85662.1"/>
    <property type="molecule type" value="mRNA"/>
</dbReference>
<dbReference type="EMBL" id="CR456736">
    <property type="protein sequence ID" value="CAG33017.1"/>
    <property type="molecule type" value="mRNA"/>
</dbReference>
<dbReference type="EMBL" id="EF445007">
    <property type="protein sequence ID" value="ACA06040.1"/>
    <property type="molecule type" value="Genomic_DNA"/>
</dbReference>
<dbReference type="EMBL" id="AP005018">
    <property type="status" value="NOT_ANNOTATED_CDS"/>
    <property type="molecule type" value="Genomic_DNA"/>
</dbReference>
<dbReference type="EMBL" id="CH471065">
    <property type="protein sequence ID" value="EAW67281.1"/>
    <property type="molecule type" value="Genomic_DNA"/>
</dbReference>
<dbReference type="EMBL" id="BC000398">
    <property type="protein sequence ID" value="AAH00398.1"/>
    <property type="molecule type" value="mRNA"/>
</dbReference>
<dbReference type="EMBL" id="BC019301">
    <property type="protein sequence ID" value="AAH19301.1"/>
    <property type="molecule type" value="mRNA"/>
</dbReference>
<dbReference type="CCDS" id="CCDS53713.1">
    <molecule id="P68402-3"/>
</dbReference>
<dbReference type="CCDS" id="CCDS53714.1">
    <molecule id="P68402-4"/>
</dbReference>
<dbReference type="CCDS" id="CCDS53715.1">
    <molecule id="P68402-2"/>
</dbReference>
<dbReference type="CCDS" id="CCDS8380.1">
    <molecule id="P68402-1"/>
</dbReference>
<dbReference type="PIR" id="JC5409">
    <property type="entry name" value="JC5409"/>
</dbReference>
<dbReference type="RefSeq" id="NP_001171675.1">
    <molecule id="P68402-4"/>
    <property type="nucleotide sequence ID" value="NM_001184746.2"/>
</dbReference>
<dbReference type="RefSeq" id="NP_001171676.1">
    <molecule id="P68402-2"/>
    <property type="nucleotide sequence ID" value="NM_001184747.2"/>
</dbReference>
<dbReference type="RefSeq" id="NP_001171677.1">
    <molecule id="P68402-3"/>
    <property type="nucleotide sequence ID" value="NM_001184748.2"/>
</dbReference>
<dbReference type="RefSeq" id="NP_001296360.1">
    <property type="nucleotide sequence ID" value="NM_001309431.1"/>
</dbReference>
<dbReference type="RefSeq" id="NP_002563.1">
    <molecule id="P68402-1"/>
    <property type="nucleotide sequence ID" value="NM_002572.4"/>
</dbReference>
<dbReference type="RefSeq" id="XP_047282998.1">
    <molecule id="P68402-1"/>
    <property type="nucleotide sequence ID" value="XM_047427042.1"/>
</dbReference>
<dbReference type="RefSeq" id="XP_047283001.1">
    <molecule id="P68402-2"/>
    <property type="nucleotide sequence ID" value="XM_047427045.1"/>
</dbReference>
<dbReference type="RefSeq" id="XP_054224980.1">
    <molecule id="P68402-1"/>
    <property type="nucleotide sequence ID" value="XM_054369005.1"/>
</dbReference>
<dbReference type="RefSeq" id="XP_054224982.1">
    <molecule id="P68402-2"/>
    <property type="nucleotide sequence ID" value="XM_054369007.1"/>
</dbReference>
<dbReference type="PDB" id="1VYH">
    <property type="method" value="X-ray"/>
    <property type="resolution" value="3.40 A"/>
    <property type="chains" value="A/B/E/F/I/J/M/N/Q/R=1-229"/>
</dbReference>
<dbReference type="PDBsum" id="1VYH"/>
<dbReference type="SMR" id="P68402"/>
<dbReference type="BioGRID" id="111086">
    <property type="interactions" value="72"/>
</dbReference>
<dbReference type="ComplexPortal" id="CPX-10328">
    <property type="entry name" value="Platelet-activating factor acetylhydrolase IB complex, alpha2-alpha2 variant"/>
</dbReference>
<dbReference type="ComplexPortal" id="CPX-10329">
    <property type="entry name" value="Platelet-activating factor acetylhydrolase IB complex, alpha1-alpha2 variant"/>
</dbReference>
<dbReference type="CORUM" id="P68402"/>
<dbReference type="FunCoup" id="P68402">
    <property type="interactions" value="3349"/>
</dbReference>
<dbReference type="IntAct" id="P68402">
    <property type="interactions" value="24"/>
</dbReference>
<dbReference type="MINT" id="P68402"/>
<dbReference type="STRING" id="9606.ENSP00000435289"/>
<dbReference type="BindingDB" id="P68402"/>
<dbReference type="ChEMBL" id="CHEMBL4463"/>
<dbReference type="GlyGen" id="P68402">
    <property type="glycosylation" value="1 site, 1 O-linked glycan (1 site)"/>
</dbReference>
<dbReference type="iPTMnet" id="P68402"/>
<dbReference type="PhosphoSitePlus" id="P68402"/>
<dbReference type="SwissPalm" id="P68402"/>
<dbReference type="BioMuta" id="PAFAH1B2"/>
<dbReference type="DMDM" id="55977294"/>
<dbReference type="REPRODUCTION-2DPAGE" id="IPI00026546"/>
<dbReference type="jPOST" id="P68402"/>
<dbReference type="MassIVE" id="P68402"/>
<dbReference type="PaxDb" id="9606-ENSP00000435289"/>
<dbReference type="PeptideAtlas" id="P68402"/>
<dbReference type="ProteomicsDB" id="21857"/>
<dbReference type="ProteomicsDB" id="57538">
    <molecule id="P68402-1"/>
</dbReference>
<dbReference type="ProteomicsDB" id="57539">
    <molecule id="P68402-2"/>
</dbReference>
<dbReference type="ProteomicsDB" id="57540">
    <molecule id="P68402-3"/>
</dbReference>
<dbReference type="Pumba" id="P68402"/>
<dbReference type="Antibodypedia" id="32310">
    <property type="antibodies" value="242 antibodies from 26 providers"/>
</dbReference>
<dbReference type="DNASU" id="5049"/>
<dbReference type="Ensembl" id="ENST00000419197.6">
    <molecule id="P68402-3"/>
    <property type="protein sequence ID" value="ENSP00000388742.2"/>
    <property type="gene ID" value="ENSG00000168092.14"/>
</dbReference>
<dbReference type="Ensembl" id="ENST00000527958.6">
    <molecule id="P68402-1"/>
    <property type="protein sequence ID" value="ENSP00000435289.1"/>
    <property type="gene ID" value="ENSG00000168092.14"/>
</dbReference>
<dbReference type="Ensembl" id="ENST00000529887.6">
    <molecule id="P68402-2"/>
    <property type="protein sequence ID" value="ENSP00000434951.2"/>
    <property type="gene ID" value="ENSG00000168092.14"/>
</dbReference>
<dbReference type="Ensembl" id="ENST00000530272.1">
    <molecule id="P68402-4"/>
    <property type="protein sequence ID" value="ENSP00000431365.1"/>
    <property type="gene ID" value="ENSG00000168092.14"/>
</dbReference>
<dbReference type="GeneID" id="5049"/>
<dbReference type="KEGG" id="hsa:5049"/>
<dbReference type="MANE-Select" id="ENST00000527958.6">
    <property type="protein sequence ID" value="ENSP00000435289.1"/>
    <property type="RefSeq nucleotide sequence ID" value="NM_002572.4"/>
    <property type="RefSeq protein sequence ID" value="NP_002563.1"/>
</dbReference>
<dbReference type="UCSC" id="uc009yzk.3">
    <molecule id="P68402-1"/>
    <property type="organism name" value="human"/>
</dbReference>
<dbReference type="AGR" id="HGNC:8575"/>
<dbReference type="CTD" id="5049"/>
<dbReference type="DisGeNET" id="5049"/>
<dbReference type="GeneCards" id="PAFAH1B2"/>
<dbReference type="HGNC" id="HGNC:8575">
    <property type="gene designation" value="PAFAH1B2"/>
</dbReference>
<dbReference type="HPA" id="ENSG00000168092">
    <property type="expression patterns" value="Low tissue specificity"/>
</dbReference>
<dbReference type="MIM" id="602508">
    <property type="type" value="gene"/>
</dbReference>
<dbReference type="neXtProt" id="NX_P68402"/>
<dbReference type="OpenTargets" id="ENSG00000168092"/>
<dbReference type="PharmGKB" id="PA32906"/>
<dbReference type="VEuPathDB" id="HostDB:ENSG00000168092"/>
<dbReference type="eggNOG" id="KOG1388">
    <property type="taxonomic scope" value="Eukaryota"/>
</dbReference>
<dbReference type="GeneTree" id="ENSGT00950000183199"/>
<dbReference type="HOGENOM" id="CLU_051989_2_0_1"/>
<dbReference type="InParanoid" id="P68402"/>
<dbReference type="OMA" id="AWNQYFA"/>
<dbReference type="OrthoDB" id="505607at2759"/>
<dbReference type="PAN-GO" id="P68402">
    <property type="GO annotations" value="3 GO annotations based on evolutionary models"/>
</dbReference>
<dbReference type="PhylomeDB" id="P68402"/>
<dbReference type="TreeFam" id="TF323955"/>
<dbReference type="BRENDA" id="3.1.1.47">
    <property type="organism ID" value="2681"/>
</dbReference>
<dbReference type="PathwayCommons" id="P68402"/>
<dbReference type="Reactome" id="R-HSA-6798695">
    <property type="pathway name" value="Neutrophil degranulation"/>
</dbReference>
<dbReference type="Reactome" id="R-HSA-6811436">
    <property type="pathway name" value="COPI-independent Golgi-to-ER retrograde traffic"/>
</dbReference>
<dbReference type="SignaLink" id="P68402"/>
<dbReference type="SIGNOR" id="P68402"/>
<dbReference type="BioGRID-ORCS" id="5049">
    <property type="hits" value="17 hits in 1161 CRISPR screens"/>
</dbReference>
<dbReference type="ChiTaRS" id="PAFAH1B2">
    <property type="organism name" value="human"/>
</dbReference>
<dbReference type="EvolutionaryTrace" id="P68402"/>
<dbReference type="GeneWiki" id="PAFAH1B2"/>
<dbReference type="GenomeRNAi" id="5049"/>
<dbReference type="Pharos" id="P68402">
    <property type="development level" value="Tchem"/>
</dbReference>
<dbReference type="PRO" id="PR:P68402"/>
<dbReference type="Proteomes" id="UP000005640">
    <property type="component" value="Chromosome 11"/>
</dbReference>
<dbReference type="RNAct" id="P68402">
    <property type="molecule type" value="protein"/>
</dbReference>
<dbReference type="Bgee" id="ENSG00000168092">
    <property type="expression patterns" value="Expressed in secondary oocyte and 192 other cell types or tissues"/>
</dbReference>
<dbReference type="ExpressionAtlas" id="P68402">
    <property type="expression patterns" value="baseline and differential"/>
</dbReference>
<dbReference type="GO" id="GO:0008247">
    <property type="term" value="C:1-alkyl-2-acetylglycerophosphocholine esterase complex"/>
    <property type="evidence" value="ECO:0000250"/>
    <property type="project" value="UniProtKB"/>
</dbReference>
<dbReference type="GO" id="GO:0005737">
    <property type="term" value="C:cytoplasm"/>
    <property type="evidence" value="ECO:0000318"/>
    <property type="project" value="GO_Central"/>
</dbReference>
<dbReference type="GO" id="GO:0005829">
    <property type="term" value="C:cytosol"/>
    <property type="evidence" value="ECO:0000314"/>
    <property type="project" value="HPA"/>
</dbReference>
<dbReference type="GO" id="GO:0070062">
    <property type="term" value="C:extracellular exosome"/>
    <property type="evidence" value="ECO:0007005"/>
    <property type="project" value="UniProtKB"/>
</dbReference>
<dbReference type="GO" id="GO:0005576">
    <property type="term" value="C:extracellular region"/>
    <property type="evidence" value="ECO:0000304"/>
    <property type="project" value="Reactome"/>
</dbReference>
<dbReference type="GO" id="GO:0001650">
    <property type="term" value="C:fibrillar center"/>
    <property type="evidence" value="ECO:0000314"/>
    <property type="project" value="HPA"/>
</dbReference>
<dbReference type="GO" id="GO:1904813">
    <property type="term" value="C:ficolin-1-rich granule lumen"/>
    <property type="evidence" value="ECO:0000304"/>
    <property type="project" value="Reactome"/>
</dbReference>
<dbReference type="GO" id="GO:0005730">
    <property type="term" value="C:nucleolus"/>
    <property type="evidence" value="ECO:0000314"/>
    <property type="project" value="HPA"/>
</dbReference>
<dbReference type="GO" id="GO:0005886">
    <property type="term" value="C:plasma membrane"/>
    <property type="evidence" value="ECO:0000314"/>
    <property type="project" value="HPA"/>
</dbReference>
<dbReference type="GO" id="GO:0034774">
    <property type="term" value="C:secretory granule lumen"/>
    <property type="evidence" value="ECO:0000304"/>
    <property type="project" value="Reactome"/>
</dbReference>
<dbReference type="GO" id="GO:0003847">
    <property type="term" value="F:1-alkyl-2-acetylglycerophosphocholine esterase activity"/>
    <property type="evidence" value="ECO:0000250"/>
    <property type="project" value="UniProtKB"/>
</dbReference>
<dbReference type="GO" id="GO:0047179">
    <property type="term" value="F:platelet-activating factor acetyltransferase activity"/>
    <property type="evidence" value="ECO:0000318"/>
    <property type="project" value="GO_Central"/>
</dbReference>
<dbReference type="GO" id="GO:0046982">
    <property type="term" value="F:protein heterodimerization activity"/>
    <property type="evidence" value="ECO:0000250"/>
    <property type="project" value="UniProtKB"/>
</dbReference>
<dbReference type="GO" id="GO:0042803">
    <property type="term" value="F:protein homodimerization activity"/>
    <property type="evidence" value="ECO:0000250"/>
    <property type="project" value="UniProtKB"/>
</dbReference>
<dbReference type="GO" id="GO:0044877">
    <property type="term" value="F:protein-containing complex binding"/>
    <property type="evidence" value="ECO:0007669"/>
    <property type="project" value="Ensembl"/>
</dbReference>
<dbReference type="GO" id="GO:0016042">
    <property type="term" value="P:lipid catabolic process"/>
    <property type="evidence" value="ECO:0007669"/>
    <property type="project" value="UniProtKB-KW"/>
</dbReference>
<dbReference type="GO" id="GO:0006629">
    <property type="term" value="P:lipid metabolic process"/>
    <property type="evidence" value="ECO:0000304"/>
    <property type="project" value="ProtInc"/>
</dbReference>
<dbReference type="GO" id="GO:0016239">
    <property type="term" value="P:positive regulation of macroautophagy"/>
    <property type="evidence" value="ECO:0000315"/>
    <property type="project" value="BHF-UCL"/>
</dbReference>
<dbReference type="GO" id="GO:0007283">
    <property type="term" value="P:spermatogenesis"/>
    <property type="evidence" value="ECO:0000250"/>
    <property type="project" value="UniProtKB"/>
</dbReference>
<dbReference type="CDD" id="cd01820">
    <property type="entry name" value="PAF_acetylesterase_like"/>
    <property type="match status" value="1"/>
</dbReference>
<dbReference type="FunFam" id="3.40.50.1110:FF:000004">
    <property type="entry name" value="Platelet-activating factor acetylhydrolase IB subunit beta"/>
    <property type="match status" value="1"/>
</dbReference>
<dbReference type="Gene3D" id="3.40.50.1110">
    <property type="entry name" value="SGNH hydrolase"/>
    <property type="match status" value="1"/>
</dbReference>
<dbReference type="InterPro" id="IPR013830">
    <property type="entry name" value="SGNH_hydro"/>
</dbReference>
<dbReference type="InterPro" id="IPR036514">
    <property type="entry name" value="SGNH_hydro_sf"/>
</dbReference>
<dbReference type="PANTHER" id="PTHR11852">
    <property type="entry name" value="PLATELET-ACTIVATING FACTOR ACETYLHYDROLASE"/>
    <property type="match status" value="1"/>
</dbReference>
<dbReference type="PANTHER" id="PTHR11852:SF1">
    <property type="entry name" value="PLATELET-ACTIVATING FACTOR ACETYLHYDROLASE IB SUBUNIT ALPHA2"/>
    <property type="match status" value="1"/>
</dbReference>
<dbReference type="Pfam" id="PF13472">
    <property type="entry name" value="Lipase_GDSL_2"/>
    <property type="match status" value="1"/>
</dbReference>
<dbReference type="SUPFAM" id="SSF52266">
    <property type="entry name" value="SGNH hydrolase"/>
    <property type="match status" value="1"/>
</dbReference>
<organism>
    <name type="scientific">Homo sapiens</name>
    <name type="common">Human</name>
    <dbReference type="NCBI Taxonomy" id="9606"/>
    <lineage>
        <taxon>Eukaryota</taxon>
        <taxon>Metazoa</taxon>
        <taxon>Chordata</taxon>
        <taxon>Craniata</taxon>
        <taxon>Vertebrata</taxon>
        <taxon>Euteleostomi</taxon>
        <taxon>Mammalia</taxon>
        <taxon>Eutheria</taxon>
        <taxon>Euarchontoglires</taxon>
        <taxon>Primates</taxon>
        <taxon>Haplorrhini</taxon>
        <taxon>Catarrhini</taxon>
        <taxon>Hominidae</taxon>
        <taxon>Homo</taxon>
    </lineage>
</organism>
<evidence type="ECO:0000250" key="1"/>
<evidence type="ECO:0000250" key="2">
    <source>
        <dbReference type="UniProtKB" id="P43034"/>
    </source>
</evidence>
<evidence type="ECO:0000250" key="3">
    <source>
        <dbReference type="UniProtKB" id="P68401"/>
    </source>
</evidence>
<evidence type="ECO:0000250" key="4">
    <source>
        <dbReference type="UniProtKB" id="Q15102"/>
    </source>
</evidence>
<evidence type="ECO:0000250" key="5">
    <source>
        <dbReference type="UniProtKB" id="Q29460"/>
    </source>
</evidence>
<evidence type="ECO:0000250" key="6">
    <source>
        <dbReference type="UniProtKB" id="Q61206"/>
    </source>
</evidence>
<evidence type="ECO:0000269" key="7">
    <source>
    </source>
</evidence>
<evidence type="ECO:0000269" key="8">
    <source>
    </source>
</evidence>
<evidence type="ECO:0000303" key="9">
    <source>
    </source>
</evidence>
<evidence type="ECO:0000303" key="10">
    <source>
    </source>
</evidence>
<evidence type="ECO:0000305" key="11"/>
<evidence type="ECO:0000312" key="12">
    <source>
        <dbReference type="HGNC" id="HGNC:8575"/>
    </source>
</evidence>
<evidence type="ECO:0007744" key="13">
    <source>
        <dbReference type="PDB" id="1VYH"/>
    </source>
</evidence>
<evidence type="ECO:0007744" key="14">
    <source>
    </source>
</evidence>
<evidence type="ECO:0007744" key="15">
    <source>
    </source>
</evidence>
<evidence type="ECO:0007744" key="16">
    <source>
    </source>
</evidence>
<evidence type="ECO:0007744" key="17">
    <source>
    </source>
</evidence>
<evidence type="ECO:0007829" key="18">
    <source>
        <dbReference type="PDB" id="1VYH"/>
    </source>
</evidence>
<feature type="initiator methionine" description="Removed" evidence="14 15 16">
    <location>
        <position position="1"/>
    </location>
</feature>
<feature type="chain" id="PRO_0000058151" description="Platelet-activating factor acetylhydrolase IB subunit alpha2">
    <location>
        <begin position="2"/>
        <end position="229"/>
    </location>
</feature>
<feature type="active site" evidence="1">
    <location>
        <position position="48"/>
    </location>
</feature>
<feature type="active site" evidence="1">
    <location>
        <position position="193"/>
    </location>
</feature>
<feature type="active site" evidence="1">
    <location>
        <position position="196"/>
    </location>
</feature>
<feature type="modified residue" description="N-acetylserine" evidence="14 15 16">
    <location>
        <position position="2"/>
    </location>
</feature>
<feature type="modified residue" description="Phosphoserine" evidence="15 16 17">
    <location>
        <position position="2"/>
    </location>
</feature>
<feature type="modified residue" description="Phosphoserine" evidence="17">
    <location>
        <position position="64"/>
    </location>
</feature>
<feature type="modified residue" description="Phosphothreonine" evidence="6">
    <location>
        <position position="220"/>
    </location>
</feature>
<feature type="splice variant" id="VSP_043217" description="In isoform 3." evidence="9">
    <location>
        <begin position="133"/>
        <end position="229"/>
    </location>
</feature>
<feature type="splice variant" id="VSP_042896" description="In isoform 2." evidence="9">
    <original>GLLPRGEKPNPLRQKNAKVNQLLKVSLPKLANVQLLDTDGGFVHSDGAISCHDMFDFLHLTGGGYAKICKPLHELIMQLLEETPEEKQTTIA</original>
    <variation>IIYWQDEQDYHERKVQMD</variation>
    <location>
        <begin position="138"/>
        <end position="229"/>
    </location>
</feature>
<feature type="splice variant" id="VSP_044680" description="In isoform 4." evidence="9">
    <original>LLPRGEKPNPLRQKNAKVNQLLKVSLPKLANVQLLDTDGGFVHSDGAISCHDMFDFLHLTGGGYAKICKPLHELIMQLLEETPEEKQTTIA</original>
    <variation>KAAASKYSISEIVRLEQGSVNWSIGTYPDDTPATTRPAILQLFTGKMSRITMKEKSRWTEEILH</variation>
    <location>
        <begin position="139"/>
        <end position="229"/>
    </location>
</feature>
<feature type="helix" evidence="18">
    <location>
        <begin position="8"/>
        <end position="10"/>
    </location>
</feature>
<feature type="strand" evidence="18">
    <location>
        <begin position="19"/>
        <end position="21"/>
    </location>
</feature>
<feature type="helix" evidence="18">
    <location>
        <begin position="23"/>
        <end position="37"/>
    </location>
</feature>
<feature type="strand" evidence="18">
    <location>
        <begin position="41"/>
        <end position="47"/>
    </location>
</feature>
<feature type="helix" evidence="18">
    <location>
        <begin position="48"/>
        <end position="53"/>
    </location>
</feature>
<feature type="helix" evidence="18">
    <location>
        <begin position="57"/>
        <end position="62"/>
    </location>
</feature>
<feature type="helix" evidence="18">
    <location>
        <begin position="64"/>
        <end position="66"/>
    </location>
</feature>
<feature type="strand" evidence="18">
    <location>
        <begin position="68"/>
        <end position="72"/>
    </location>
</feature>
<feature type="helix" evidence="18">
    <location>
        <begin position="78"/>
        <end position="86"/>
    </location>
</feature>
<feature type="turn" evidence="18">
    <location>
        <begin position="87"/>
        <end position="90"/>
    </location>
</feature>
<feature type="strand" evidence="18">
    <location>
        <begin position="96"/>
        <end position="101"/>
    </location>
</feature>
<feature type="helix" evidence="18">
    <location>
        <begin position="111"/>
        <end position="128"/>
    </location>
</feature>
<feature type="strand" evidence="18">
    <location>
        <begin position="133"/>
        <end position="137"/>
    </location>
</feature>
<feature type="strand" evidence="18">
    <location>
        <begin position="143"/>
        <end position="145"/>
    </location>
</feature>
<feature type="helix" evidence="18">
    <location>
        <begin position="148"/>
        <end position="163"/>
    </location>
</feature>
<feature type="strand" evidence="18">
    <location>
        <begin position="164"/>
        <end position="167"/>
    </location>
</feature>
<feature type="strand" evidence="18">
    <location>
        <begin position="170"/>
        <end position="173"/>
    </location>
</feature>
<feature type="turn" evidence="18">
    <location>
        <begin position="188"/>
        <end position="190"/>
    </location>
</feature>
<feature type="strand" evidence="18">
    <location>
        <begin position="194"/>
        <end position="197"/>
    </location>
</feature>
<feature type="helix" evidence="18">
    <location>
        <begin position="199"/>
        <end position="219"/>
    </location>
</feature>
<feature type="sequence conflict" description="In Ref. 2; ABI58227/ABI58228." evidence="11" ref="2">
    <original>V</original>
    <variation>M</variation>
    <location sequence="P68402-4">
        <position position="151"/>
    </location>
</feature>
<proteinExistence type="evidence at protein level"/>